<sequence>MVKLVFARHGESEWNKANLFTGWADVDLSEKGTQQAIDAGKLIKEAGIEFDQAYTSVLKRAIKTTNLALEASDQLWVPVEKSWRLNERHYGGLTGKNKAEAAEQFGDEQVHIWRRSYDVLPPNMDRDDEHSAHTDRRYASLDDSVIPDAENLKVTLERALPFWEDKIAPALKDGKNVFVGAHGNSIRALVKHIKGLSDDEIMDVEIPNFPPLVFEFDEKLNVVSEYYLGK</sequence>
<comment type="function">
    <text evidence="1">Catalyzes the interconversion of 2-phosphoglycerate and 3-phosphoglycerate.</text>
</comment>
<comment type="catalytic activity">
    <reaction evidence="1">
        <text>(2R)-2-phosphoglycerate = (2R)-3-phosphoglycerate</text>
        <dbReference type="Rhea" id="RHEA:15901"/>
        <dbReference type="ChEBI" id="CHEBI:58272"/>
        <dbReference type="ChEBI" id="CHEBI:58289"/>
        <dbReference type="EC" id="5.4.2.11"/>
    </reaction>
</comment>
<comment type="pathway">
    <text evidence="1">Carbohydrate degradation; glycolysis; pyruvate from D-glyceraldehyde 3-phosphate: step 3/5.</text>
</comment>
<comment type="similarity">
    <text evidence="1">Belongs to the phosphoglycerate mutase family. BPG-dependent PGAM subfamily.</text>
</comment>
<organism>
    <name type="scientific">Streptococcus pneumoniae serotype 19F (strain G54)</name>
    <dbReference type="NCBI Taxonomy" id="512566"/>
    <lineage>
        <taxon>Bacteria</taxon>
        <taxon>Bacillati</taxon>
        <taxon>Bacillota</taxon>
        <taxon>Bacilli</taxon>
        <taxon>Lactobacillales</taxon>
        <taxon>Streptococcaceae</taxon>
        <taxon>Streptococcus</taxon>
    </lineage>
</organism>
<feature type="chain" id="PRO_1000135983" description="2,3-bisphosphoglycerate-dependent phosphoglycerate mutase">
    <location>
        <begin position="1"/>
        <end position="230"/>
    </location>
</feature>
<feature type="active site" description="Tele-phosphohistidine intermediate" evidence="1">
    <location>
        <position position="9"/>
    </location>
</feature>
<feature type="active site" description="Proton donor/acceptor" evidence="1">
    <location>
        <position position="87"/>
    </location>
</feature>
<feature type="binding site" evidence="1">
    <location>
        <begin position="8"/>
        <end position="15"/>
    </location>
    <ligand>
        <name>substrate</name>
    </ligand>
</feature>
<feature type="binding site" evidence="1">
    <location>
        <begin position="21"/>
        <end position="22"/>
    </location>
    <ligand>
        <name>substrate</name>
    </ligand>
</feature>
<feature type="binding site" evidence="1">
    <location>
        <position position="60"/>
    </location>
    <ligand>
        <name>substrate</name>
    </ligand>
</feature>
<feature type="binding site" evidence="1">
    <location>
        <begin position="87"/>
        <end position="90"/>
    </location>
    <ligand>
        <name>substrate</name>
    </ligand>
</feature>
<feature type="binding site" evidence="1">
    <location>
        <position position="98"/>
    </location>
    <ligand>
        <name>substrate</name>
    </ligand>
</feature>
<feature type="binding site" evidence="1">
    <location>
        <begin position="114"/>
        <end position="115"/>
    </location>
    <ligand>
        <name>substrate</name>
    </ligand>
</feature>
<feature type="binding site" evidence="1">
    <location>
        <begin position="183"/>
        <end position="184"/>
    </location>
    <ligand>
        <name>substrate</name>
    </ligand>
</feature>
<feature type="site" description="Transition state stabilizer" evidence="1">
    <location>
        <position position="182"/>
    </location>
</feature>
<accession>B5E706</accession>
<name>GPMA_STRP4</name>
<protein>
    <recommendedName>
        <fullName evidence="1">2,3-bisphosphoglycerate-dependent phosphoglycerate mutase</fullName>
        <shortName evidence="1">BPG-dependent PGAM</shortName>
        <shortName evidence="1">PGAM</shortName>
        <shortName evidence="1">Phosphoglyceromutase</shortName>
        <shortName evidence="1">dPGM</shortName>
        <ecNumber evidence="1">5.4.2.11</ecNumber>
    </recommendedName>
</protein>
<evidence type="ECO:0000255" key="1">
    <source>
        <dbReference type="HAMAP-Rule" id="MF_01039"/>
    </source>
</evidence>
<proteinExistence type="inferred from homology"/>
<gene>
    <name evidence="1" type="primary">gpmA</name>
    <name type="ordered locus">SPG_1565</name>
</gene>
<keyword id="KW-0312">Gluconeogenesis</keyword>
<keyword id="KW-0324">Glycolysis</keyword>
<keyword id="KW-0413">Isomerase</keyword>
<dbReference type="EC" id="5.4.2.11" evidence="1"/>
<dbReference type="EMBL" id="CP001015">
    <property type="protein sequence ID" value="ACF54800.1"/>
    <property type="molecule type" value="Genomic_DNA"/>
</dbReference>
<dbReference type="SMR" id="B5E706"/>
<dbReference type="KEGG" id="spx:SPG_1565"/>
<dbReference type="HOGENOM" id="CLU_033323_1_5_9"/>
<dbReference type="UniPathway" id="UPA00109">
    <property type="reaction ID" value="UER00186"/>
</dbReference>
<dbReference type="GO" id="GO:0004619">
    <property type="term" value="F:phosphoglycerate mutase activity"/>
    <property type="evidence" value="ECO:0007669"/>
    <property type="project" value="UniProtKB-EC"/>
</dbReference>
<dbReference type="GO" id="GO:0006094">
    <property type="term" value="P:gluconeogenesis"/>
    <property type="evidence" value="ECO:0007669"/>
    <property type="project" value="UniProtKB-UniRule"/>
</dbReference>
<dbReference type="GO" id="GO:0006096">
    <property type="term" value="P:glycolytic process"/>
    <property type="evidence" value="ECO:0007669"/>
    <property type="project" value="UniProtKB-UniRule"/>
</dbReference>
<dbReference type="CDD" id="cd07067">
    <property type="entry name" value="HP_PGM_like"/>
    <property type="match status" value="1"/>
</dbReference>
<dbReference type="FunFam" id="3.40.50.1240:FF:000003">
    <property type="entry name" value="2,3-bisphosphoglycerate-dependent phosphoglycerate mutase"/>
    <property type="match status" value="1"/>
</dbReference>
<dbReference type="Gene3D" id="3.40.50.1240">
    <property type="entry name" value="Phosphoglycerate mutase-like"/>
    <property type="match status" value="1"/>
</dbReference>
<dbReference type="HAMAP" id="MF_01039">
    <property type="entry name" value="PGAM_GpmA"/>
    <property type="match status" value="1"/>
</dbReference>
<dbReference type="InterPro" id="IPR013078">
    <property type="entry name" value="His_Pase_superF_clade-1"/>
</dbReference>
<dbReference type="InterPro" id="IPR029033">
    <property type="entry name" value="His_PPase_superfam"/>
</dbReference>
<dbReference type="InterPro" id="IPR005952">
    <property type="entry name" value="Phosphogly_mut1"/>
</dbReference>
<dbReference type="NCBIfam" id="TIGR01258">
    <property type="entry name" value="pgm_1"/>
    <property type="match status" value="1"/>
</dbReference>
<dbReference type="NCBIfam" id="NF010713">
    <property type="entry name" value="PRK14115.1"/>
    <property type="match status" value="1"/>
</dbReference>
<dbReference type="NCBIfam" id="NF010715">
    <property type="entry name" value="PRK14117.1"/>
    <property type="match status" value="1"/>
</dbReference>
<dbReference type="PANTHER" id="PTHR11931">
    <property type="entry name" value="PHOSPHOGLYCERATE MUTASE"/>
    <property type="match status" value="1"/>
</dbReference>
<dbReference type="Pfam" id="PF00300">
    <property type="entry name" value="His_Phos_1"/>
    <property type="match status" value="1"/>
</dbReference>
<dbReference type="PIRSF" id="PIRSF000709">
    <property type="entry name" value="6PFK_2-Ptase"/>
    <property type="match status" value="1"/>
</dbReference>
<dbReference type="SMART" id="SM00855">
    <property type="entry name" value="PGAM"/>
    <property type="match status" value="1"/>
</dbReference>
<dbReference type="SUPFAM" id="SSF53254">
    <property type="entry name" value="Phosphoglycerate mutase-like"/>
    <property type="match status" value="1"/>
</dbReference>
<reference key="1">
    <citation type="journal article" date="2001" name="Microb. Drug Resist.">
        <title>Annotated draft genomic sequence from a Streptococcus pneumoniae type 19F clinical isolate.</title>
        <authorList>
            <person name="Dopazo J."/>
            <person name="Mendoza A."/>
            <person name="Herrero J."/>
            <person name="Caldara F."/>
            <person name="Humbert Y."/>
            <person name="Friedli L."/>
            <person name="Guerrier M."/>
            <person name="Grand-Schenk E."/>
            <person name="Gandin C."/>
            <person name="de Francesco M."/>
            <person name="Polissi A."/>
            <person name="Buell G."/>
            <person name="Feger G."/>
            <person name="Garcia E."/>
            <person name="Peitsch M."/>
            <person name="Garcia-Bustos J.F."/>
        </authorList>
    </citation>
    <scope>NUCLEOTIDE SEQUENCE [LARGE SCALE GENOMIC DNA]</scope>
    <source>
        <strain>G54</strain>
    </source>
</reference>
<reference key="2">
    <citation type="submission" date="2008-03" db="EMBL/GenBank/DDBJ databases">
        <title>Pneumococcal beta glucoside metabolism investigated by whole genome comparison.</title>
        <authorList>
            <person name="Mulas L."/>
            <person name="Trappetti C."/>
            <person name="Hakenbeck R."/>
            <person name="Iannelli F."/>
            <person name="Pozzi G."/>
            <person name="Davidsen T.M."/>
            <person name="Tettelin H."/>
            <person name="Oggioni M."/>
        </authorList>
    </citation>
    <scope>NUCLEOTIDE SEQUENCE [LARGE SCALE GENOMIC DNA]</scope>
    <source>
        <strain>G54</strain>
    </source>
</reference>